<sequence length="144" mass="14989">MRLNSLSPAEGAKHSAKRLGRGIGSGLGKTGGRGHKGQKSRTGGGVRRGFEGGQMPLYRRLPKFGFTSLKSFHVAEIRLNDLAKVDGNEVTLESLKAANVITKDILSVKVILAGKIEKAVVVKGLGVTKGAKAAIEAAGGSIEE</sequence>
<accession>B0BSV0</accession>
<proteinExistence type="inferred from homology"/>
<comment type="function">
    <text evidence="1">Binds to the 23S rRNA.</text>
</comment>
<comment type="subunit">
    <text evidence="1">Part of the 50S ribosomal subunit.</text>
</comment>
<comment type="similarity">
    <text evidence="1">Belongs to the universal ribosomal protein uL15 family.</text>
</comment>
<organism>
    <name type="scientific">Actinobacillus pleuropneumoniae serotype 3 (strain JL03)</name>
    <dbReference type="NCBI Taxonomy" id="434271"/>
    <lineage>
        <taxon>Bacteria</taxon>
        <taxon>Pseudomonadati</taxon>
        <taxon>Pseudomonadota</taxon>
        <taxon>Gammaproteobacteria</taxon>
        <taxon>Pasteurellales</taxon>
        <taxon>Pasteurellaceae</taxon>
        <taxon>Actinobacillus</taxon>
    </lineage>
</organism>
<evidence type="ECO:0000255" key="1">
    <source>
        <dbReference type="HAMAP-Rule" id="MF_01341"/>
    </source>
</evidence>
<evidence type="ECO:0000256" key="2">
    <source>
        <dbReference type="SAM" id="MobiDB-lite"/>
    </source>
</evidence>
<evidence type="ECO:0000305" key="3"/>
<dbReference type="EMBL" id="CP000687">
    <property type="protein sequence ID" value="ABY70364.1"/>
    <property type="molecule type" value="Genomic_DNA"/>
</dbReference>
<dbReference type="RefSeq" id="WP_005602615.1">
    <property type="nucleotide sequence ID" value="NC_010278.1"/>
</dbReference>
<dbReference type="SMR" id="B0BSV0"/>
<dbReference type="KEGG" id="apj:APJL_1814"/>
<dbReference type="HOGENOM" id="CLU_055188_4_2_6"/>
<dbReference type="Proteomes" id="UP000008547">
    <property type="component" value="Chromosome"/>
</dbReference>
<dbReference type="GO" id="GO:0022625">
    <property type="term" value="C:cytosolic large ribosomal subunit"/>
    <property type="evidence" value="ECO:0007669"/>
    <property type="project" value="TreeGrafter"/>
</dbReference>
<dbReference type="GO" id="GO:0019843">
    <property type="term" value="F:rRNA binding"/>
    <property type="evidence" value="ECO:0007669"/>
    <property type="project" value="UniProtKB-UniRule"/>
</dbReference>
<dbReference type="GO" id="GO:0003735">
    <property type="term" value="F:structural constituent of ribosome"/>
    <property type="evidence" value="ECO:0007669"/>
    <property type="project" value="InterPro"/>
</dbReference>
<dbReference type="GO" id="GO:0006412">
    <property type="term" value="P:translation"/>
    <property type="evidence" value="ECO:0007669"/>
    <property type="project" value="UniProtKB-UniRule"/>
</dbReference>
<dbReference type="Gene3D" id="3.100.10.10">
    <property type="match status" value="1"/>
</dbReference>
<dbReference type="HAMAP" id="MF_01341">
    <property type="entry name" value="Ribosomal_uL15"/>
    <property type="match status" value="1"/>
</dbReference>
<dbReference type="InterPro" id="IPR030878">
    <property type="entry name" value="Ribosomal_uL15"/>
</dbReference>
<dbReference type="InterPro" id="IPR021131">
    <property type="entry name" value="Ribosomal_uL15/eL18"/>
</dbReference>
<dbReference type="InterPro" id="IPR036227">
    <property type="entry name" value="Ribosomal_uL15/eL18_sf"/>
</dbReference>
<dbReference type="InterPro" id="IPR005749">
    <property type="entry name" value="Ribosomal_uL15_bac-type"/>
</dbReference>
<dbReference type="InterPro" id="IPR001196">
    <property type="entry name" value="Ribosomal_uL15_CS"/>
</dbReference>
<dbReference type="NCBIfam" id="TIGR01071">
    <property type="entry name" value="rplO_bact"/>
    <property type="match status" value="1"/>
</dbReference>
<dbReference type="PANTHER" id="PTHR12934">
    <property type="entry name" value="50S RIBOSOMAL PROTEIN L15"/>
    <property type="match status" value="1"/>
</dbReference>
<dbReference type="PANTHER" id="PTHR12934:SF11">
    <property type="entry name" value="LARGE RIBOSOMAL SUBUNIT PROTEIN UL15M"/>
    <property type="match status" value="1"/>
</dbReference>
<dbReference type="Pfam" id="PF00828">
    <property type="entry name" value="Ribosomal_L27A"/>
    <property type="match status" value="1"/>
</dbReference>
<dbReference type="SUPFAM" id="SSF52080">
    <property type="entry name" value="Ribosomal proteins L15p and L18e"/>
    <property type="match status" value="1"/>
</dbReference>
<dbReference type="PROSITE" id="PS00475">
    <property type="entry name" value="RIBOSOMAL_L15"/>
    <property type="match status" value="1"/>
</dbReference>
<gene>
    <name evidence="1" type="primary">rplO</name>
    <name type="ordered locus">APJL_1814</name>
</gene>
<protein>
    <recommendedName>
        <fullName evidence="1">Large ribosomal subunit protein uL15</fullName>
    </recommendedName>
    <alternativeName>
        <fullName evidence="3">50S ribosomal protein L15</fullName>
    </alternativeName>
</protein>
<name>RL15_ACTPJ</name>
<reference key="1">
    <citation type="journal article" date="2008" name="PLoS ONE">
        <title>Genome biology of Actinobacillus pleuropneumoniae JL03, an isolate of serotype 3 prevalent in China.</title>
        <authorList>
            <person name="Xu Z."/>
            <person name="Zhou Y."/>
            <person name="Li L."/>
            <person name="Zhou R."/>
            <person name="Xiao S."/>
            <person name="Wan Y."/>
            <person name="Zhang S."/>
            <person name="Wang K."/>
            <person name="Li W."/>
            <person name="Li L."/>
            <person name="Jin H."/>
            <person name="Kang M."/>
            <person name="Dalai B."/>
            <person name="Li T."/>
            <person name="Liu L."/>
            <person name="Cheng Y."/>
            <person name="Zhang L."/>
            <person name="Xu T."/>
            <person name="Zheng H."/>
            <person name="Pu S."/>
            <person name="Wang B."/>
            <person name="Gu W."/>
            <person name="Zhang X.L."/>
            <person name="Zhu G.-F."/>
            <person name="Wang S."/>
            <person name="Zhao G.-P."/>
            <person name="Chen H."/>
        </authorList>
    </citation>
    <scope>NUCLEOTIDE SEQUENCE [LARGE SCALE GENOMIC DNA]</scope>
    <source>
        <strain>JL03</strain>
    </source>
</reference>
<keyword id="KW-0687">Ribonucleoprotein</keyword>
<keyword id="KW-0689">Ribosomal protein</keyword>
<keyword id="KW-0694">RNA-binding</keyword>
<keyword id="KW-0699">rRNA-binding</keyword>
<feature type="chain" id="PRO_1000142764" description="Large ribosomal subunit protein uL15">
    <location>
        <begin position="1"/>
        <end position="144"/>
    </location>
</feature>
<feature type="region of interest" description="Disordered" evidence="2">
    <location>
        <begin position="1"/>
        <end position="52"/>
    </location>
</feature>
<feature type="compositionally biased region" description="Gly residues" evidence="2">
    <location>
        <begin position="21"/>
        <end position="31"/>
    </location>
</feature>